<organism>
    <name type="scientific">Brucella melitensis biotype 1 (strain ATCC 23456 / CCUG 17765 / NCTC 10094 / 16M)</name>
    <dbReference type="NCBI Taxonomy" id="224914"/>
    <lineage>
        <taxon>Bacteria</taxon>
        <taxon>Pseudomonadati</taxon>
        <taxon>Pseudomonadota</taxon>
        <taxon>Alphaproteobacteria</taxon>
        <taxon>Hyphomicrobiales</taxon>
        <taxon>Brucellaceae</taxon>
        <taxon>Brucella/Ochrobactrum group</taxon>
        <taxon>Brucella</taxon>
    </lineage>
</organism>
<comment type="function">
    <text evidence="1">IGPS catalyzes the conversion of PRFAR and glutamine to IGP, AICAR and glutamate. The HisF subunit catalyzes the cyclization activity that produces IGP and AICAR from PRFAR using the ammonia provided by the HisH subunit (By similarity).</text>
</comment>
<comment type="catalytic activity">
    <reaction>
        <text>5-[(5-phospho-1-deoxy-D-ribulos-1-ylimino)methylamino]-1-(5-phospho-beta-D-ribosyl)imidazole-4-carboxamide + L-glutamine = D-erythro-1-(imidazol-4-yl)glycerol 3-phosphate + 5-amino-1-(5-phospho-beta-D-ribosyl)imidazole-4-carboxamide + L-glutamate + H(+)</text>
        <dbReference type="Rhea" id="RHEA:24793"/>
        <dbReference type="ChEBI" id="CHEBI:15378"/>
        <dbReference type="ChEBI" id="CHEBI:29985"/>
        <dbReference type="ChEBI" id="CHEBI:58278"/>
        <dbReference type="ChEBI" id="CHEBI:58359"/>
        <dbReference type="ChEBI" id="CHEBI:58475"/>
        <dbReference type="ChEBI" id="CHEBI:58525"/>
        <dbReference type="EC" id="4.3.2.10"/>
    </reaction>
</comment>
<comment type="pathway">
    <text>Amino-acid biosynthesis; L-histidine biosynthesis; L-histidine from 5-phospho-alpha-D-ribose 1-diphosphate: step 5/9.</text>
</comment>
<comment type="subunit">
    <text evidence="1">Heterodimer of HisH and HisF.</text>
</comment>
<comment type="subcellular location">
    <subcellularLocation>
        <location evidence="1">Cytoplasm</location>
    </subcellularLocation>
</comment>
<comment type="similarity">
    <text evidence="3">Belongs to the HisA/HisF family.</text>
</comment>
<protein>
    <recommendedName>
        <fullName>Imidazole glycerol phosphate synthase subunit HisF</fullName>
        <ecNumber>4.3.2.10</ecNumber>
    </recommendedName>
    <alternativeName>
        <fullName>IGP synthase cyclase subunit</fullName>
    </alternativeName>
    <alternativeName>
        <fullName>IGP synthase subunit HisF</fullName>
    </alternativeName>
    <alternativeName>
        <fullName>ImGP synthase subunit HisF</fullName>
        <shortName>IGPS subunit HisF</shortName>
    </alternativeName>
</protein>
<sequence length="261" mass="27455">MTLKARVIPCLDVKDGRVVKGVNFVDLIDAGDPVEAARAYDAAGADELCFLDITASSDNRETIFDVVARTAEQCFMPLTVGGGVRQVADIRKLLLAGADKVSINTAAVKNPEFVAEAADKFGNQCIVVAIDAKKVSGAGENDHWEIFTHGGRQPTGIDAVEFAQKVVDLGAGEILLTSMDRDGTKAGYDVALTRAVADSVRAPVIASGGVGTLDHLVAGIRDGHATAVLAASIFHFGTYTIGEAKRYMAEAGIPMRLDPVR</sequence>
<reference key="1">
    <citation type="journal article" date="2002" name="Proc. Natl. Acad. Sci. U.S.A.">
        <title>The genome sequence of the facultative intracellular pathogen Brucella melitensis.</title>
        <authorList>
            <person name="DelVecchio V.G."/>
            <person name="Kapatral V."/>
            <person name="Redkar R.J."/>
            <person name="Patra G."/>
            <person name="Mujer C."/>
            <person name="Los T."/>
            <person name="Ivanova N."/>
            <person name="Anderson I."/>
            <person name="Bhattacharyya A."/>
            <person name="Lykidis A."/>
            <person name="Reznik G."/>
            <person name="Jablonski L."/>
            <person name="Larsen N."/>
            <person name="D'Souza M."/>
            <person name="Bernal A."/>
            <person name="Mazur M."/>
            <person name="Goltsman E."/>
            <person name="Selkov E."/>
            <person name="Elzer P.H."/>
            <person name="Hagius S."/>
            <person name="O'Callaghan D."/>
            <person name="Letesson J.-J."/>
            <person name="Haselkorn R."/>
            <person name="Kyrpides N.C."/>
            <person name="Overbeek R."/>
        </authorList>
    </citation>
    <scope>NUCLEOTIDE SEQUENCE [LARGE SCALE GENOMIC DNA]</scope>
    <source>
        <strain>ATCC 23456 / CCUG 17765 / NCTC 10094 / 16M</strain>
    </source>
</reference>
<gene>
    <name type="primary">hisF</name>
    <name type="ordered locus">BMEI2041</name>
</gene>
<proteinExistence type="inferred from homology"/>
<evidence type="ECO:0000250" key="1"/>
<evidence type="ECO:0000255" key="2"/>
<evidence type="ECO:0000305" key="3"/>
<accession>Q8YE37</accession>
<feature type="chain" id="PRO_0000142130" description="Imidazole glycerol phosphate synthase subunit HisF">
    <location>
        <begin position="1"/>
        <end position="261"/>
    </location>
</feature>
<feature type="active site" evidence="2">
    <location>
        <position position="12"/>
    </location>
</feature>
<feature type="active site" evidence="2">
    <location>
        <position position="131"/>
    </location>
</feature>
<dbReference type="EC" id="4.3.2.10"/>
<dbReference type="EMBL" id="AE008917">
    <property type="protein sequence ID" value="AAL53222.1"/>
    <property type="molecule type" value="Genomic_DNA"/>
</dbReference>
<dbReference type="PIR" id="AC3507">
    <property type="entry name" value="AC3507"/>
</dbReference>
<dbReference type="RefSeq" id="WP_004684543.1">
    <property type="nucleotide sequence ID" value="NZ_GG703778.1"/>
</dbReference>
<dbReference type="SMR" id="Q8YE37"/>
<dbReference type="GeneID" id="29594929"/>
<dbReference type="KEGG" id="bme:BMEI2041"/>
<dbReference type="eggNOG" id="COG0107">
    <property type="taxonomic scope" value="Bacteria"/>
</dbReference>
<dbReference type="UniPathway" id="UPA00031">
    <property type="reaction ID" value="UER00010"/>
</dbReference>
<dbReference type="Proteomes" id="UP000000419">
    <property type="component" value="Chromosome I"/>
</dbReference>
<dbReference type="GO" id="GO:0005737">
    <property type="term" value="C:cytoplasm"/>
    <property type="evidence" value="ECO:0007669"/>
    <property type="project" value="UniProtKB-SubCell"/>
</dbReference>
<dbReference type="GO" id="GO:0000107">
    <property type="term" value="F:imidazoleglycerol-phosphate synthase activity"/>
    <property type="evidence" value="ECO:0007669"/>
    <property type="project" value="UniProtKB-UniRule"/>
</dbReference>
<dbReference type="GO" id="GO:0016829">
    <property type="term" value="F:lyase activity"/>
    <property type="evidence" value="ECO:0007669"/>
    <property type="project" value="UniProtKB-KW"/>
</dbReference>
<dbReference type="GO" id="GO:0000105">
    <property type="term" value="P:L-histidine biosynthetic process"/>
    <property type="evidence" value="ECO:0007669"/>
    <property type="project" value="UniProtKB-UniRule"/>
</dbReference>
<dbReference type="CDD" id="cd04731">
    <property type="entry name" value="HisF"/>
    <property type="match status" value="1"/>
</dbReference>
<dbReference type="FunFam" id="3.20.20.70:FF:000006">
    <property type="entry name" value="Imidazole glycerol phosphate synthase subunit HisF"/>
    <property type="match status" value="1"/>
</dbReference>
<dbReference type="Gene3D" id="3.20.20.70">
    <property type="entry name" value="Aldolase class I"/>
    <property type="match status" value="1"/>
</dbReference>
<dbReference type="HAMAP" id="MF_01013">
    <property type="entry name" value="HisF"/>
    <property type="match status" value="1"/>
</dbReference>
<dbReference type="InterPro" id="IPR013785">
    <property type="entry name" value="Aldolase_TIM"/>
</dbReference>
<dbReference type="InterPro" id="IPR006062">
    <property type="entry name" value="His_biosynth"/>
</dbReference>
<dbReference type="InterPro" id="IPR004651">
    <property type="entry name" value="HisF"/>
</dbReference>
<dbReference type="InterPro" id="IPR050064">
    <property type="entry name" value="IGPS_HisA/HisF"/>
</dbReference>
<dbReference type="InterPro" id="IPR011060">
    <property type="entry name" value="RibuloseP-bd_barrel"/>
</dbReference>
<dbReference type="NCBIfam" id="TIGR00735">
    <property type="entry name" value="hisF"/>
    <property type="match status" value="1"/>
</dbReference>
<dbReference type="PANTHER" id="PTHR21235:SF2">
    <property type="entry name" value="IMIDAZOLE GLYCEROL PHOSPHATE SYNTHASE HISHF"/>
    <property type="match status" value="1"/>
</dbReference>
<dbReference type="PANTHER" id="PTHR21235">
    <property type="entry name" value="IMIDAZOLE GLYCEROL PHOSPHATE SYNTHASE SUBUNIT HISF/H IGP SYNTHASE SUBUNIT HISF/H"/>
    <property type="match status" value="1"/>
</dbReference>
<dbReference type="Pfam" id="PF00977">
    <property type="entry name" value="His_biosynth"/>
    <property type="match status" value="1"/>
</dbReference>
<dbReference type="SUPFAM" id="SSF51366">
    <property type="entry name" value="Ribulose-phoshate binding barrel"/>
    <property type="match status" value="1"/>
</dbReference>
<keyword id="KW-0028">Amino-acid biosynthesis</keyword>
<keyword id="KW-0963">Cytoplasm</keyword>
<keyword id="KW-0368">Histidine biosynthesis</keyword>
<keyword id="KW-0456">Lyase</keyword>
<name>HIS6_BRUME</name>